<sequence length="487" mass="51375">MTTHYIAGNWQAGQGETLQSLNPVTQAVVWQGQGAVASQVDAAVQAARQAFPAWAQLSLEARIDVLEKFAAQLKVHAEAMAQCIGEETGKPLWESATEVTSMINKVAISVQSYRERTGEKSGPLADATAVLRHKPHGVVAVFGPYNFPGHLPNGHIVPALLAGNCVVFKPSELTPKVAELTVNCWIAAGLPAGVLNLVQGARETGVALAANPGIDGLFFTGSSRTGNLLHQQFAGRPDKILALEMGGNNPLVVDEVKDLDAAVYTIIQSAFISAGQRCTCARRLLVPQGSWGDALIARLVDVCKTITVGAFDEQPAPFMGSVISLQAARALIAAQAELAAKGGVKLLEMTQPQADAALLTPGIIDVTAVDERPDEEFFGPLLQVIRYVDFDAAIDEANNTQYGLAAGLLSDSRARYQYFWLRSRAGIVNWNKQLTGAASSAPFGGVGASGNHRASAYYAADYCAYPVASLETASLALPATLTPGVTL</sequence>
<comment type="function">
    <text evidence="1">Catalyzes the NAD-dependent reduction of succinylglutamate semialdehyde into succinylglutamate.</text>
</comment>
<comment type="catalytic activity">
    <reaction evidence="1">
        <text>N-succinyl-L-glutamate 5-semialdehyde + NAD(+) + H2O = N-succinyl-L-glutamate + NADH + 2 H(+)</text>
        <dbReference type="Rhea" id="RHEA:10812"/>
        <dbReference type="ChEBI" id="CHEBI:15377"/>
        <dbReference type="ChEBI" id="CHEBI:15378"/>
        <dbReference type="ChEBI" id="CHEBI:57540"/>
        <dbReference type="ChEBI" id="CHEBI:57945"/>
        <dbReference type="ChEBI" id="CHEBI:58520"/>
        <dbReference type="ChEBI" id="CHEBI:58763"/>
        <dbReference type="EC" id="1.2.1.71"/>
    </reaction>
</comment>
<comment type="pathway">
    <text evidence="1">Amino-acid degradation; L-arginine degradation via AST pathway; L-glutamate and succinate from L-arginine: step 4/5.</text>
</comment>
<comment type="similarity">
    <text evidence="1">Belongs to the aldehyde dehydrogenase family. AstD subfamily.</text>
</comment>
<proteinExistence type="inferred from homology"/>
<organism>
    <name type="scientific">Pseudomonas putida (strain GB-1)</name>
    <dbReference type="NCBI Taxonomy" id="76869"/>
    <lineage>
        <taxon>Bacteria</taxon>
        <taxon>Pseudomonadati</taxon>
        <taxon>Pseudomonadota</taxon>
        <taxon>Gammaproteobacteria</taxon>
        <taxon>Pseudomonadales</taxon>
        <taxon>Pseudomonadaceae</taxon>
        <taxon>Pseudomonas</taxon>
    </lineage>
</organism>
<accession>B0KR47</accession>
<dbReference type="EC" id="1.2.1.71" evidence="1"/>
<dbReference type="EMBL" id="CP000926">
    <property type="protein sequence ID" value="ABY99873.1"/>
    <property type="molecule type" value="Genomic_DNA"/>
</dbReference>
<dbReference type="RefSeq" id="WP_012273561.1">
    <property type="nucleotide sequence ID" value="NC_010322.1"/>
</dbReference>
<dbReference type="SMR" id="B0KR47"/>
<dbReference type="KEGG" id="ppg:PputGB1_3983"/>
<dbReference type="eggNOG" id="COG1012">
    <property type="taxonomic scope" value="Bacteria"/>
</dbReference>
<dbReference type="HOGENOM" id="CLU_005391_1_0_6"/>
<dbReference type="UniPathway" id="UPA00185">
    <property type="reaction ID" value="UER00282"/>
</dbReference>
<dbReference type="Proteomes" id="UP000002157">
    <property type="component" value="Chromosome"/>
</dbReference>
<dbReference type="GO" id="GO:0043824">
    <property type="term" value="F:succinylglutamate-semialdehyde dehydrogenase activity"/>
    <property type="evidence" value="ECO:0007669"/>
    <property type="project" value="UniProtKB-EC"/>
</dbReference>
<dbReference type="GO" id="GO:0019544">
    <property type="term" value="P:arginine catabolic process to glutamate"/>
    <property type="evidence" value="ECO:0007669"/>
    <property type="project" value="UniProtKB-UniRule"/>
</dbReference>
<dbReference type="GO" id="GO:0019545">
    <property type="term" value="P:arginine catabolic process to succinate"/>
    <property type="evidence" value="ECO:0007669"/>
    <property type="project" value="UniProtKB-UniRule"/>
</dbReference>
<dbReference type="CDD" id="cd07095">
    <property type="entry name" value="ALDH_SGSD_AstD"/>
    <property type="match status" value="1"/>
</dbReference>
<dbReference type="FunFam" id="3.40.309.10:FF:000013">
    <property type="entry name" value="N-succinylglutamate 5-semialdehyde dehydrogenase"/>
    <property type="match status" value="1"/>
</dbReference>
<dbReference type="FunFam" id="3.40.605.10:FF:000010">
    <property type="entry name" value="N-succinylglutamate 5-semialdehyde dehydrogenase"/>
    <property type="match status" value="1"/>
</dbReference>
<dbReference type="Gene3D" id="3.40.605.10">
    <property type="entry name" value="Aldehyde Dehydrogenase, Chain A, domain 1"/>
    <property type="match status" value="1"/>
</dbReference>
<dbReference type="Gene3D" id="3.40.309.10">
    <property type="entry name" value="Aldehyde Dehydrogenase, Chain A, domain 2"/>
    <property type="match status" value="1"/>
</dbReference>
<dbReference type="HAMAP" id="MF_01174">
    <property type="entry name" value="Aldedh_AstD"/>
    <property type="match status" value="1"/>
</dbReference>
<dbReference type="InterPro" id="IPR016161">
    <property type="entry name" value="Ald_DH/histidinol_DH"/>
</dbReference>
<dbReference type="InterPro" id="IPR016163">
    <property type="entry name" value="Ald_DH_C"/>
</dbReference>
<dbReference type="InterPro" id="IPR016160">
    <property type="entry name" value="Ald_DH_CS_CYS"/>
</dbReference>
<dbReference type="InterPro" id="IPR029510">
    <property type="entry name" value="Ald_DH_CS_GLU"/>
</dbReference>
<dbReference type="InterPro" id="IPR016162">
    <property type="entry name" value="Ald_DH_N"/>
</dbReference>
<dbReference type="InterPro" id="IPR015590">
    <property type="entry name" value="Aldehyde_DH_dom"/>
</dbReference>
<dbReference type="InterPro" id="IPR017649">
    <property type="entry name" value="SuccinylGlu_semiald_DH_AstD"/>
</dbReference>
<dbReference type="NCBIfam" id="TIGR03240">
    <property type="entry name" value="arg_catab_astD"/>
    <property type="match status" value="1"/>
</dbReference>
<dbReference type="NCBIfam" id="NF006992">
    <property type="entry name" value="PRK09457.1"/>
    <property type="match status" value="1"/>
</dbReference>
<dbReference type="PANTHER" id="PTHR11699">
    <property type="entry name" value="ALDEHYDE DEHYDROGENASE-RELATED"/>
    <property type="match status" value="1"/>
</dbReference>
<dbReference type="Pfam" id="PF00171">
    <property type="entry name" value="Aldedh"/>
    <property type="match status" value="1"/>
</dbReference>
<dbReference type="SUPFAM" id="SSF53720">
    <property type="entry name" value="ALDH-like"/>
    <property type="match status" value="1"/>
</dbReference>
<dbReference type="PROSITE" id="PS00070">
    <property type="entry name" value="ALDEHYDE_DEHYDR_CYS"/>
    <property type="match status" value="1"/>
</dbReference>
<dbReference type="PROSITE" id="PS00687">
    <property type="entry name" value="ALDEHYDE_DEHYDR_GLU"/>
    <property type="match status" value="1"/>
</dbReference>
<keyword id="KW-0056">Arginine metabolism</keyword>
<keyword id="KW-0520">NAD</keyword>
<keyword id="KW-0560">Oxidoreductase</keyword>
<reference key="1">
    <citation type="submission" date="2008-01" db="EMBL/GenBank/DDBJ databases">
        <title>Complete sequence of Pseudomonas putida GB-1.</title>
        <authorList>
            <consortium name="US DOE Joint Genome Institute"/>
            <person name="Copeland A."/>
            <person name="Lucas S."/>
            <person name="Lapidus A."/>
            <person name="Barry K."/>
            <person name="Glavina del Rio T."/>
            <person name="Dalin E."/>
            <person name="Tice H."/>
            <person name="Pitluck S."/>
            <person name="Bruce D."/>
            <person name="Goodwin L."/>
            <person name="Chertkov O."/>
            <person name="Brettin T."/>
            <person name="Detter J.C."/>
            <person name="Han C."/>
            <person name="Kuske C.R."/>
            <person name="Schmutz J."/>
            <person name="Larimer F."/>
            <person name="Land M."/>
            <person name="Hauser L."/>
            <person name="Kyrpides N."/>
            <person name="Kim E."/>
            <person name="McCarthy J.K."/>
            <person name="Richardson P."/>
        </authorList>
    </citation>
    <scope>NUCLEOTIDE SEQUENCE [LARGE SCALE GENOMIC DNA]</scope>
    <source>
        <strain>GB-1</strain>
    </source>
</reference>
<protein>
    <recommendedName>
        <fullName evidence="1">N-succinylglutamate 5-semialdehyde dehydrogenase</fullName>
        <ecNumber evidence="1">1.2.1.71</ecNumber>
    </recommendedName>
    <alternativeName>
        <fullName evidence="1">Succinylglutamic semialdehyde dehydrogenase</fullName>
        <shortName evidence="1">SGSD</shortName>
    </alternativeName>
</protein>
<name>ASTD_PSEPG</name>
<gene>
    <name evidence="1" type="primary">astD</name>
    <name type="ordered locus">PputGB1_3983</name>
</gene>
<evidence type="ECO:0000255" key="1">
    <source>
        <dbReference type="HAMAP-Rule" id="MF_01174"/>
    </source>
</evidence>
<feature type="chain" id="PRO_1000085403" description="N-succinylglutamate 5-semialdehyde dehydrogenase">
    <location>
        <begin position="1"/>
        <end position="487"/>
    </location>
</feature>
<feature type="active site" evidence="1">
    <location>
        <position position="244"/>
    </location>
</feature>
<feature type="active site" evidence="1">
    <location>
        <position position="278"/>
    </location>
</feature>
<feature type="binding site" evidence="1">
    <location>
        <begin position="221"/>
        <end position="226"/>
    </location>
    <ligand>
        <name>NAD(+)</name>
        <dbReference type="ChEBI" id="CHEBI:57540"/>
    </ligand>
</feature>